<evidence type="ECO:0000255" key="1">
    <source>
        <dbReference type="HAMAP-Rule" id="MF_00125"/>
    </source>
</evidence>
<feature type="chain" id="PRO_0000242865" description="ATP phosphoribosyltransferase regulatory subunit">
    <location>
        <begin position="1"/>
        <end position="410"/>
    </location>
</feature>
<name>HISZ_SYNJA</name>
<gene>
    <name evidence="1" type="primary">hisZ</name>
    <name type="ordered locus">CYA_1524</name>
</gene>
<dbReference type="EMBL" id="CP000239">
    <property type="protein sequence ID" value="ABC99688.1"/>
    <property type="molecule type" value="Genomic_DNA"/>
</dbReference>
<dbReference type="SMR" id="Q2JUD2"/>
<dbReference type="STRING" id="321327.CYA_1524"/>
<dbReference type="KEGG" id="cya:CYA_1524"/>
<dbReference type="eggNOG" id="COG3705">
    <property type="taxonomic scope" value="Bacteria"/>
</dbReference>
<dbReference type="HOGENOM" id="CLU_025113_0_2_3"/>
<dbReference type="OrthoDB" id="9800814at2"/>
<dbReference type="UniPathway" id="UPA00031">
    <property type="reaction ID" value="UER00006"/>
</dbReference>
<dbReference type="Proteomes" id="UP000008818">
    <property type="component" value="Chromosome"/>
</dbReference>
<dbReference type="GO" id="GO:0005737">
    <property type="term" value="C:cytoplasm"/>
    <property type="evidence" value="ECO:0007669"/>
    <property type="project" value="UniProtKB-SubCell"/>
</dbReference>
<dbReference type="GO" id="GO:0004821">
    <property type="term" value="F:histidine-tRNA ligase activity"/>
    <property type="evidence" value="ECO:0007669"/>
    <property type="project" value="TreeGrafter"/>
</dbReference>
<dbReference type="GO" id="GO:0006427">
    <property type="term" value="P:histidyl-tRNA aminoacylation"/>
    <property type="evidence" value="ECO:0007669"/>
    <property type="project" value="TreeGrafter"/>
</dbReference>
<dbReference type="GO" id="GO:0000105">
    <property type="term" value="P:L-histidine biosynthetic process"/>
    <property type="evidence" value="ECO:0007669"/>
    <property type="project" value="UniProtKB-UniRule"/>
</dbReference>
<dbReference type="CDD" id="cd00773">
    <property type="entry name" value="HisRS-like_core"/>
    <property type="match status" value="1"/>
</dbReference>
<dbReference type="Gene3D" id="3.30.930.10">
    <property type="entry name" value="Bira Bifunctional Protein, Domain 2"/>
    <property type="match status" value="1"/>
</dbReference>
<dbReference type="HAMAP" id="MF_00125">
    <property type="entry name" value="HisZ"/>
    <property type="match status" value="1"/>
</dbReference>
<dbReference type="InterPro" id="IPR006195">
    <property type="entry name" value="aa-tRNA-synth_II"/>
</dbReference>
<dbReference type="InterPro" id="IPR045864">
    <property type="entry name" value="aa-tRNA-synth_II/BPL/LPL"/>
</dbReference>
<dbReference type="InterPro" id="IPR041715">
    <property type="entry name" value="HisRS-like_core"/>
</dbReference>
<dbReference type="InterPro" id="IPR004516">
    <property type="entry name" value="HisRS/HisZ"/>
</dbReference>
<dbReference type="InterPro" id="IPR004517">
    <property type="entry name" value="HisZ"/>
</dbReference>
<dbReference type="NCBIfam" id="TIGR00443">
    <property type="entry name" value="hisZ_biosyn_reg"/>
    <property type="match status" value="1"/>
</dbReference>
<dbReference type="NCBIfam" id="NF008940">
    <property type="entry name" value="PRK12292.2-3"/>
    <property type="match status" value="1"/>
</dbReference>
<dbReference type="PANTHER" id="PTHR43707:SF1">
    <property type="entry name" value="HISTIDINE--TRNA LIGASE, MITOCHONDRIAL-RELATED"/>
    <property type="match status" value="1"/>
</dbReference>
<dbReference type="PANTHER" id="PTHR43707">
    <property type="entry name" value="HISTIDYL-TRNA SYNTHETASE"/>
    <property type="match status" value="1"/>
</dbReference>
<dbReference type="Pfam" id="PF13393">
    <property type="entry name" value="tRNA-synt_His"/>
    <property type="match status" value="1"/>
</dbReference>
<dbReference type="PIRSF" id="PIRSF001549">
    <property type="entry name" value="His-tRNA_synth"/>
    <property type="match status" value="1"/>
</dbReference>
<dbReference type="SUPFAM" id="SSF55681">
    <property type="entry name" value="Class II aaRS and biotin synthetases"/>
    <property type="match status" value="1"/>
</dbReference>
<dbReference type="PROSITE" id="PS50862">
    <property type="entry name" value="AA_TRNA_LIGASE_II"/>
    <property type="match status" value="1"/>
</dbReference>
<protein>
    <recommendedName>
        <fullName evidence="1">ATP phosphoribosyltransferase regulatory subunit</fullName>
    </recommendedName>
</protein>
<sequence length="410" mass="45308">MLWETSSLRPPTGARDFLPREVQRRERLEAQLTQVFRRYGYQRIITPTLEPLETLLAGGSIRAEAVLQLRDGEGTMLGLRPEFTASIVRAAATRLASGPLPLRLYYHGNVFRNSRREEGSYSSQEFFQSGVELIGAGGWLADAEILLLLADCVRAVGLSNWTLLLGDVSLTESLLNSVTPKAQAAVRRAIAQLDYVYLEAAPLPEAARQIGLQILGLRGQPEQVLPQLAQLPVSPERLRDLRQLCQILEAQQVRVVLDLSLLQTLAYYTGIVFQAVVGGEIIALGGRYDRLYALYSPQQLEQPGIGFTLLPDTLLRLLPPTPQDEATGCKRLVVPLVPAGIPAALALAARWRESEAVELELLDRSPEEIEAYARRCRIPEIAWVQADGSYHISPVKYPEPPDPTGHCGPR</sequence>
<organism>
    <name type="scientific">Synechococcus sp. (strain JA-3-3Ab)</name>
    <name type="common">Cyanobacteria bacterium Yellowstone A-Prime</name>
    <dbReference type="NCBI Taxonomy" id="321327"/>
    <lineage>
        <taxon>Bacteria</taxon>
        <taxon>Bacillati</taxon>
        <taxon>Cyanobacteriota</taxon>
        <taxon>Cyanophyceae</taxon>
        <taxon>Synechococcales</taxon>
        <taxon>Synechococcaceae</taxon>
        <taxon>Synechococcus</taxon>
    </lineage>
</organism>
<reference key="1">
    <citation type="journal article" date="2007" name="ISME J.">
        <title>Population level functional diversity in a microbial community revealed by comparative genomic and metagenomic analyses.</title>
        <authorList>
            <person name="Bhaya D."/>
            <person name="Grossman A.R."/>
            <person name="Steunou A.-S."/>
            <person name="Khuri N."/>
            <person name="Cohan F.M."/>
            <person name="Hamamura N."/>
            <person name="Melendrez M.C."/>
            <person name="Bateson M.M."/>
            <person name="Ward D.M."/>
            <person name="Heidelberg J.F."/>
        </authorList>
    </citation>
    <scope>NUCLEOTIDE SEQUENCE [LARGE SCALE GENOMIC DNA]</scope>
    <source>
        <strain>JA-3-3Ab</strain>
    </source>
</reference>
<accession>Q2JUD2</accession>
<keyword id="KW-0028">Amino-acid biosynthesis</keyword>
<keyword id="KW-0963">Cytoplasm</keyword>
<keyword id="KW-0368">Histidine biosynthesis</keyword>
<proteinExistence type="inferred from homology"/>
<comment type="function">
    <text evidence="1">Required for the first step of histidine biosynthesis. May allow the feedback regulation of ATP phosphoribosyltransferase activity by histidine.</text>
</comment>
<comment type="pathway">
    <text evidence="1">Amino-acid biosynthesis; L-histidine biosynthesis; L-histidine from 5-phospho-alpha-D-ribose 1-diphosphate: step 1/9.</text>
</comment>
<comment type="subunit">
    <text evidence="1">Heteromultimer composed of HisG and HisZ subunits.</text>
</comment>
<comment type="subcellular location">
    <subcellularLocation>
        <location evidence="1">Cytoplasm</location>
    </subcellularLocation>
</comment>
<comment type="miscellaneous">
    <text>This function is generally fulfilled by the C-terminal part of HisG, which is missing in some bacteria such as this one.</text>
</comment>
<comment type="similarity">
    <text evidence="1">Belongs to the class-II aminoacyl-tRNA synthetase family. HisZ subfamily.</text>
</comment>